<comment type="function">
    <text evidence="1">Contributes to K(+)/H(+) antiport activity by supporting proton efflux to control proton extrusion and homeostasis in chloroplasts in a light-dependent manner to modulate photosynthesis. Prevents excessive induction of non-photochemical quenching (NPQ) under continuous-light conditions. Indirectly promotes efficient inorganic carbon uptake into chloroplasts.</text>
</comment>
<comment type="catalytic activity">
    <reaction evidence="1">
        <text>K(+)(in) + H(+)(out) = K(+)(out) + H(+)(in)</text>
        <dbReference type="Rhea" id="RHEA:29467"/>
        <dbReference type="ChEBI" id="CHEBI:15378"/>
        <dbReference type="ChEBI" id="CHEBI:29103"/>
    </reaction>
</comment>
<comment type="subcellular location">
    <subcellularLocation>
        <location evidence="1">Plastid</location>
        <location evidence="1">Chloroplast inner membrane</location>
        <topology evidence="1">Multi-pass membrane protein</topology>
    </subcellularLocation>
</comment>
<comment type="similarity">
    <text evidence="1 2">Belongs to the CemA family.</text>
</comment>
<protein>
    <recommendedName>
        <fullName evidence="1">Potassium/proton antiporter CemA</fullName>
    </recommendedName>
    <alternativeName>
        <fullName evidence="1">Chloroplast envelope membrane protein A</fullName>
        <shortName evidence="1">CemA</shortName>
    </alternativeName>
</protein>
<evidence type="ECO:0000255" key="1">
    <source>
        <dbReference type="HAMAP-Rule" id="MF_01308"/>
    </source>
</evidence>
<evidence type="ECO:0000305" key="2"/>
<accession>A4QLU5</accession>
<feature type="chain" id="PRO_0000293522" description="Potassium/proton antiporter CemA">
    <location>
        <begin position="1"/>
        <end position="229"/>
    </location>
</feature>
<feature type="transmembrane region" description="Helical" evidence="1">
    <location>
        <begin position="6"/>
        <end position="26"/>
    </location>
</feature>
<feature type="transmembrane region" description="Helical" evidence="1">
    <location>
        <begin position="107"/>
        <end position="127"/>
    </location>
</feature>
<feature type="transmembrane region" description="Helical" evidence="1">
    <location>
        <begin position="189"/>
        <end position="209"/>
    </location>
</feature>
<geneLocation type="chloroplast"/>
<proteinExistence type="inferred from homology"/>
<name>CEMA_NASOF</name>
<organism>
    <name type="scientific">Nasturtium officinale</name>
    <name type="common">Watercress</name>
    <name type="synonym">Rorippa nasturtium-aquaticum</name>
    <dbReference type="NCBI Taxonomy" id="65948"/>
    <lineage>
        <taxon>Eukaryota</taxon>
        <taxon>Viridiplantae</taxon>
        <taxon>Streptophyta</taxon>
        <taxon>Embryophyta</taxon>
        <taxon>Tracheophyta</taxon>
        <taxon>Spermatophyta</taxon>
        <taxon>Magnoliopsida</taxon>
        <taxon>eudicotyledons</taxon>
        <taxon>Gunneridae</taxon>
        <taxon>Pentapetalae</taxon>
        <taxon>rosids</taxon>
        <taxon>malvids</taxon>
        <taxon>Brassicales</taxon>
        <taxon>Brassicaceae</taxon>
        <taxon>Cardamineae</taxon>
        <taxon>Nasturtium</taxon>
    </lineage>
</organism>
<reference key="1">
    <citation type="submission" date="2007-03" db="EMBL/GenBank/DDBJ databases">
        <title>Sequencing analysis of Nasturtium officinale chloroplast DNA.</title>
        <authorList>
            <person name="Hosouchi T."/>
            <person name="Tsuruoka H."/>
            <person name="Kotani H."/>
        </authorList>
    </citation>
    <scope>NUCLEOTIDE SEQUENCE [LARGE SCALE GENOMIC DNA]</scope>
</reference>
<sequence length="229" mass="27378">MAKKKAFIPFFYFTSIVFLPWLISLCCNKSLKTWITNWWNTRQCETFLNDIQEKSVLEKFIQLEDLFQLDEMIKEYTETDLQQFRLGIHKETIQFIKIHNEYRIHTILHFSTNLISFVILSGYSFWGKEKLFILNSWVQEFLYNLSDTIKAFSILLLTDLCIGFHSPHGWELMIGYIYKDFGFAHYEQILSGLVSTFPVILDTIFKYWIFRYLNRVSPSLVVIYHAIND</sequence>
<gene>
    <name evidence="1" type="primary">cemA</name>
    <name type="synonym">ycf10</name>
</gene>
<keyword id="KW-0050">Antiport</keyword>
<keyword id="KW-0150">Chloroplast</keyword>
<keyword id="KW-0375">Hydrogen ion transport</keyword>
<keyword id="KW-0406">Ion transport</keyword>
<keyword id="KW-0472">Membrane</keyword>
<keyword id="KW-0934">Plastid</keyword>
<keyword id="KW-1001">Plastid inner membrane</keyword>
<keyword id="KW-0630">Potassium</keyword>
<keyword id="KW-0633">Potassium transport</keyword>
<keyword id="KW-0812">Transmembrane</keyword>
<keyword id="KW-1133">Transmembrane helix</keyword>
<keyword id="KW-0813">Transport</keyword>
<dbReference type="EMBL" id="AP009376">
    <property type="protein sequence ID" value="BAF50650.1"/>
    <property type="molecule type" value="Genomic_DNA"/>
</dbReference>
<dbReference type="RefSeq" id="YP_001123826.1">
    <property type="nucleotide sequence ID" value="NC_009275.1"/>
</dbReference>
<dbReference type="GeneID" id="4962174"/>
<dbReference type="GO" id="GO:0009706">
    <property type="term" value="C:chloroplast inner membrane"/>
    <property type="evidence" value="ECO:0007669"/>
    <property type="project" value="UniProtKB-SubCell"/>
</dbReference>
<dbReference type="GO" id="GO:0015297">
    <property type="term" value="F:antiporter activity"/>
    <property type="evidence" value="ECO:0007669"/>
    <property type="project" value="UniProtKB-KW"/>
</dbReference>
<dbReference type="GO" id="GO:0015078">
    <property type="term" value="F:proton transmembrane transporter activity"/>
    <property type="evidence" value="ECO:0007669"/>
    <property type="project" value="UniProtKB-UniRule"/>
</dbReference>
<dbReference type="GO" id="GO:0006813">
    <property type="term" value="P:potassium ion transport"/>
    <property type="evidence" value="ECO:0007669"/>
    <property type="project" value="UniProtKB-UniRule"/>
</dbReference>
<dbReference type="HAMAP" id="MF_01308">
    <property type="entry name" value="CemA_PxcA"/>
    <property type="match status" value="1"/>
</dbReference>
<dbReference type="InterPro" id="IPR004282">
    <property type="entry name" value="CemA"/>
</dbReference>
<dbReference type="PANTHER" id="PTHR33650:SF2">
    <property type="entry name" value="CHLOROPLAST ENVELOPE MEMBRANE PROTEIN"/>
    <property type="match status" value="1"/>
</dbReference>
<dbReference type="PANTHER" id="PTHR33650">
    <property type="entry name" value="CHLOROPLAST ENVELOPE MEMBRANE PROTEIN-RELATED"/>
    <property type="match status" value="1"/>
</dbReference>
<dbReference type="Pfam" id="PF03040">
    <property type="entry name" value="CemA"/>
    <property type="match status" value="1"/>
</dbReference>